<proteinExistence type="evidence at protein level"/>
<sequence>MKLSLAAALLGALAVSAQTSTECNPLKQKCPADPALAGSADFGLTSESPRFHATGGTPTYGNDGASLTIGKRFDAPKLTSDFYIMFGYVEWEIKAAPGKGIVSSAVLLSDCLDEIDWEFLGGDPNQVQSNFFGKGDTTTYDRVKFHPAPNNNQEFHKYAVDWTADKTTFYIDGQNVRELTPDAAKGQYPQTPMRVLAGSWAGGDPSNNQGTIEWAGGETDFSKVPFTMFVKSIKVTDYSTGKEYVYKDMTGKWESIQAVDGQVNKSGKPGSGPKVESSTLPSSPSTSAHVPVHTVPGGGIGNPQAPNTGSSPSNTLTNGPSSTMTSLVGLPSSWIVTETGTGGVVTPTSAAESTSHHSDYTSRSSRSVSSSVSASSGNGGHGMTTSTGSGSAPTGTGSLPGSGSGSAPGYPVPTGTNGGGSNNPTDGGASPTSPAMQAPGSTGAIHSVSNALLLSFCAIAAWALV</sequence>
<feature type="signal peptide" evidence="4">
    <location>
        <begin position="1"/>
        <end position="21"/>
    </location>
</feature>
<feature type="chain" id="PRO_0000434904" description="Crh-like protein ARB_05253">
    <location>
        <begin position="22"/>
        <end position="441"/>
    </location>
</feature>
<feature type="propeptide" id="PRO_0000434905" description="Removed in mature form" evidence="4">
    <location>
        <begin position="442"/>
        <end position="465"/>
    </location>
</feature>
<feature type="domain" description="GH16" evidence="6">
    <location>
        <begin position="22"/>
        <end position="223"/>
    </location>
</feature>
<feature type="region of interest" description="Disordered" evidence="7">
    <location>
        <begin position="261"/>
        <end position="325"/>
    </location>
</feature>
<feature type="region of interest" description="Disordered" evidence="7">
    <location>
        <begin position="339"/>
        <end position="442"/>
    </location>
</feature>
<feature type="compositionally biased region" description="Low complexity" evidence="7">
    <location>
        <begin position="277"/>
        <end position="287"/>
    </location>
</feature>
<feature type="compositionally biased region" description="Polar residues" evidence="7">
    <location>
        <begin position="304"/>
        <end position="325"/>
    </location>
</feature>
<feature type="compositionally biased region" description="Low complexity" evidence="7">
    <location>
        <begin position="339"/>
        <end position="348"/>
    </location>
</feature>
<feature type="compositionally biased region" description="Low complexity" evidence="7">
    <location>
        <begin position="361"/>
        <end position="376"/>
    </location>
</feature>
<feature type="compositionally biased region" description="Low complexity" evidence="7">
    <location>
        <begin position="383"/>
        <end position="397"/>
    </location>
</feature>
<feature type="active site" description="Nucleophile" evidence="1">
    <location>
        <position position="114"/>
    </location>
</feature>
<feature type="active site" description="Proton donor" evidence="1">
    <location>
        <position position="118"/>
    </location>
</feature>
<feature type="binding site" evidence="3">
    <location>
        <position position="118"/>
    </location>
    <ligand>
        <name>chitin</name>
        <dbReference type="ChEBI" id="CHEBI:17029"/>
    </ligand>
</feature>
<feature type="binding site" evidence="3">
    <location>
        <position position="200"/>
    </location>
    <ligand>
        <name>chitin</name>
        <dbReference type="ChEBI" id="CHEBI:17029"/>
    </ligand>
</feature>
<feature type="binding site" evidence="3">
    <location>
        <position position="211"/>
    </location>
    <ligand>
        <name>chitin</name>
        <dbReference type="ChEBI" id="CHEBI:17029"/>
    </ligand>
</feature>
<feature type="lipid moiety-binding region" description="GPI-anchor amidated serine" evidence="4">
    <location>
        <position position="441"/>
    </location>
</feature>
<feature type="glycosylation site" description="N-linked (GlcNAc...) asparagine" evidence="5">
    <location>
        <position position="264"/>
    </location>
</feature>
<feature type="disulfide bond" evidence="3">
    <location>
        <begin position="23"/>
        <end position="30"/>
    </location>
</feature>
<dbReference type="EC" id="3.2.1.14" evidence="3"/>
<dbReference type="EC" id="2.4.-.-" evidence="3"/>
<dbReference type="EMBL" id="ABSU01000002">
    <property type="protein sequence ID" value="EFE36314.1"/>
    <property type="status" value="ALT_SEQ"/>
    <property type="molecule type" value="Genomic_DNA"/>
</dbReference>
<dbReference type="RefSeq" id="XP_003016959.1">
    <property type="nucleotide sequence ID" value="XM_003016913.1"/>
</dbReference>
<dbReference type="SMR" id="D4ALQ5"/>
<dbReference type="GeneID" id="9526680"/>
<dbReference type="KEGG" id="abe:ARB_05253"/>
<dbReference type="eggNOG" id="ENOG502QQ71">
    <property type="taxonomic scope" value="Eukaryota"/>
</dbReference>
<dbReference type="HOGENOM" id="CLU_027506_2_0_1"/>
<dbReference type="OrthoDB" id="4781at2759"/>
<dbReference type="Proteomes" id="UP000008866">
    <property type="component" value="Unassembled WGS sequence"/>
</dbReference>
<dbReference type="GO" id="GO:0005576">
    <property type="term" value="C:extracellular region"/>
    <property type="evidence" value="ECO:0007669"/>
    <property type="project" value="UniProtKB-SubCell"/>
</dbReference>
<dbReference type="GO" id="GO:0009277">
    <property type="term" value="C:fungal-type cell wall"/>
    <property type="evidence" value="ECO:0007669"/>
    <property type="project" value="TreeGrafter"/>
</dbReference>
<dbReference type="GO" id="GO:0098552">
    <property type="term" value="C:side of membrane"/>
    <property type="evidence" value="ECO:0007669"/>
    <property type="project" value="UniProtKB-KW"/>
</dbReference>
<dbReference type="GO" id="GO:0016757">
    <property type="term" value="F:glycosyltransferase activity"/>
    <property type="evidence" value="ECO:0007669"/>
    <property type="project" value="TreeGrafter"/>
</dbReference>
<dbReference type="GO" id="GO:0004553">
    <property type="term" value="F:hydrolase activity, hydrolyzing O-glycosyl compounds"/>
    <property type="evidence" value="ECO:0007669"/>
    <property type="project" value="InterPro"/>
</dbReference>
<dbReference type="GO" id="GO:0005975">
    <property type="term" value="P:carbohydrate metabolic process"/>
    <property type="evidence" value="ECO:0007669"/>
    <property type="project" value="InterPro"/>
</dbReference>
<dbReference type="GO" id="GO:0031505">
    <property type="term" value="P:fungal-type cell wall organization"/>
    <property type="evidence" value="ECO:0007669"/>
    <property type="project" value="TreeGrafter"/>
</dbReference>
<dbReference type="CDD" id="cd02183">
    <property type="entry name" value="GH16_fungal_CRH1_transglycosylase"/>
    <property type="match status" value="1"/>
</dbReference>
<dbReference type="Gene3D" id="2.60.120.200">
    <property type="match status" value="1"/>
</dbReference>
<dbReference type="InterPro" id="IPR013320">
    <property type="entry name" value="ConA-like_dom_sf"/>
</dbReference>
<dbReference type="InterPro" id="IPR000757">
    <property type="entry name" value="GH16"/>
</dbReference>
<dbReference type="InterPro" id="IPR017168">
    <property type="entry name" value="Glyco_hydro_16_CRH1_prd"/>
</dbReference>
<dbReference type="InterPro" id="IPR050546">
    <property type="entry name" value="Glycosyl_Hydrlase_16"/>
</dbReference>
<dbReference type="PANTHER" id="PTHR10963:SF68">
    <property type="entry name" value="GLYCOSIDASE CRH1-RELATED"/>
    <property type="match status" value="1"/>
</dbReference>
<dbReference type="PANTHER" id="PTHR10963">
    <property type="entry name" value="GLYCOSYL HYDROLASE-RELATED"/>
    <property type="match status" value="1"/>
</dbReference>
<dbReference type="Pfam" id="PF00722">
    <property type="entry name" value="Glyco_hydro_16"/>
    <property type="match status" value="1"/>
</dbReference>
<dbReference type="PIRSF" id="PIRSF037299">
    <property type="entry name" value="Glycosidase_CRH1_prd"/>
    <property type="match status" value="1"/>
</dbReference>
<dbReference type="SUPFAM" id="SSF49899">
    <property type="entry name" value="Concanavalin A-like lectins/glucanases"/>
    <property type="match status" value="1"/>
</dbReference>
<dbReference type="PROSITE" id="PS51762">
    <property type="entry name" value="GH16_2"/>
    <property type="match status" value="1"/>
</dbReference>
<name>CRH11_ARTBC</name>
<gene>
    <name type="ORF">ARB_05253</name>
</gene>
<protein>
    <recommendedName>
        <fullName evidence="3">Crh-like protein ARB_05253</fullName>
    </recommendedName>
    <domain>
        <recommendedName>
            <fullName evidence="3">Chitinase ARB_05253</fullName>
            <ecNumber evidence="3">3.2.1.14</ecNumber>
        </recommendedName>
    </domain>
    <domain>
        <recommendedName>
            <fullName evidence="3">Chitin transglycosylase ARB_05253</fullName>
            <ecNumber evidence="3">2.4.-.-</ecNumber>
        </recommendedName>
    </domain>
</protein>
<organism>
    <name type="scientific">Arthroderma benhamiae (strain ATCC MYA-4681 / CBS 112371)</name>
    <name type="common">Trichophyton mentagrophytes</name>
    <dbReference type="NCBI Taxonomy" id="663331"/>
    <lineage>
        <taxon>Eukaryota</taxon>
        <taxon>Fungi</taxon>
        <taxon>Dikarya</taxon>
        <taxon>Ascomycota</taxon>
        <taxon>Pezizomycotina</taxon>
        <taxon>Eurotiomycetes</taxon>
        <taxon>Eurotiomycetidae</taxon>
        <taxon>Onygenales</taxon>
        <taxon>Arthrodermataceae</taxon>
        <taxon>Trichophyton</taxon>
    </lineage>
</organism>
<accession>D4ALQ5</accession>
<evidence type="ECO:0000250" key="1">
    <source>
        <dbReference type="UniProtKB" id="P27051"/>
    </source>
</evidence>
<evidence type="ECO:0000250" key="2">
    <source>
        <dbReference type="UniProtKB" id="Q5AFA2"/>
    </source>
</evidence>
<evidence type="ECO:0000250" key="3">
    <source>
        <dbReference type="UniProtKB" id="Q8J0P4"/>
    </source>
</evidence>
<evidence type="ECO:0000255" key="4"/>
<evidence type="ECO:0000255" key="5">
    <source>
        <dbReference type="PROSITE-ProRule" id="PRU00498"/>
    </source>
</evidence>
<evidence type="ECO:0000255" key="6">
    <source>
        <dbReference type="PROSITE-ProRule" id="PRU01098"/>
    </source>
</evidence>
<evidence type="ECO:0000256" key="7">
    <source>
        <dbReference type="SAM" id="MobiDB-lite"/>
    </source>
</evidence>
<evidence type="ECO:0000269" key="8">
    <source>
    </source>
</evidence>
<evidence type="ECO:0000305" key="9"/>
<comment type="function">
    <text evidence="3">Dual chitinase/transglycosylase that plays a role in cell wall architecture (By similarity). Chitinase and transglycosylase activities are coupled (By similarity). Required for the polysaccharide cross-linking at the septa and the cell wall (By similarity). More specifically, transfers chitin to 1,6-beta-glucan in the cell wall (By similarity).</text>
</comment>
<comment type="catalytic activity">
    <reaction evidence="3">
        <text>Random endo-hydrolysis of N-acetyl-beta-D-glucosaminide (1-&gt;4)-beta-linkages in chitin and chitodextrins.</text>
        <dbReference type="EC" id="3.2.1.14"/>
    </reaction>
</comment>
<comment type="subcellular location">
    <subcellularLocation>
        <location evidence="8">Secreted</location>
    </subcellularLocation>
    <subcellularLocation>
        <location evidence="2">Secreted</location>
        <location evidence="2">Cell wall</location>
    </subcellularLocation>
    <subcellularLocation>
        <location evidence="4">Membrane</location>
        <topology evidence="4">Lipid-anchor</topology>
        <topology evidence="4">GPI-anchor</topology>
    </subcellularLocation>
    <text>Covalently-linked GPI-modified cell wall protein (GPI-CWP).</text>
</comment>
<comment type="PTM">
    <text evidence="9">The GPI-anchor is attached to the protein in the endoplasmic reticulum and serves to target the protein to the cell surface. There, the glucosamine-inositol phospholipid moiety is cleaved off and the GPI-modified mannoprotein is covalently attached via its lipidless GPI glycan remnant to the 1,6-beta-glucan of the outer cell wall layer.</text>
</comment>
<comment type="similarity">
    <text evidence="9">Belongs to the glycosyl hydrolase 16 family. CRH1 subfamily.</text>
</comment>
<comment type="sequence caution" evidence="9">
    <conflict type="erroneous gene model prediction">
        <sequence resource="EMBL-CDS" id="EFE36314"/>
    </conflict>
</comment>
<reference key="1">
    <citation type="journal article" date="2011" name="Genome Biol.">
        <title>Comparative and functional genomics provide insights into the pathogenicity of dermatophytic fungi.</title>
        <authorList>
            <person name="Burmester A."/>
            <person name="Shelest E."/>
            <person name="Gloeckner G."/>
            <person name="Heddergott C."/>
            <person name="Schindler S."/>
            <person name="Staib P."/>
            <person name="Heidel A."/>
            <person name="Felder M."/>
            <person name="Petzold A."/>
            <person name="Szafranski K."/>
            <person name="Feuermann M."/>
            <person name="Pedruzzi I."/>
            <person name="Priebe S."/>
            <person name="Groth M."/>
            <person name="Winkler R."/>
            <person name="Li W."/>
            <person name="Kniemeyer O."/>
            <person name="Schroeckh V."/>
            <person name="Hertweck C."/>
            <person name="Hube B."/>
            <person name="White T.C."/>
            <person name="Platzer M."/>
            <person name="Guthke R."/>
            <person name="Heitman J."/>
            <person name="Woestemeyer J."/>
            <person name="Zipfel P.F."/>
            <person name="Monod M."/>
            <person name="Brakhage A.A."/>
        </authorList>
    </citation>
    <scope>NUCLEOTIDE SEQUENCE [LARGE SCALE GENOMIC DNA]</scope>
    <source>
        <strain>ATCC MYA-4681 / CBS 112371</strain>
    </source>
</reference>
<reference key="2">
    <citation type="journal article" date="2011" name="Proteomics">
        <title>Identification of novel secreted proteases during extracellular proteolysis by dermatophytes at acidic pH.</title>
        <authorList>
            <person name="Sriranganadane D."/>
            <person name="Waridel P."/>
            <person name="Salamin K."/>
            <person name="Feuermann M."/>
            <person name="Mignon B."/>
            <person name="Staib P."/>
            <person name="Neuhaus J.M."/>
            <person name="Quadroni M."/>
            <person name="Monod M."/>
        </authorList>
    </citation>
    <scope>IDENTIFICATION BY MASS SPECTROMETRY</scope>
    <scope>SUBCELLULAR LOCATION</scope>
</reference>
<keyword id="KW-0134">Cell wall</keyword>
<keyword id="KW-0961">Cell wall biogenesis/degradation</keyword>
<keyword id="KW-1015">Disulfide bond</keyword>
<keyword id="KW-0325">Glycoprotein</keyword>
<keyword id="KW-0326">Glycosidase</keyword>
<keyword id="KW-0328">Glycosyltransferase</keyword>
<keyword id="KW-0336">GPI-anchor</keyword>
<keyword id="KW-0378">Hydrolase</keyword>
<keyword id="KW-0449">Lipoprotein</keyword>
<keyword id="KW-0472">Membrane</keyword>
<keyword id="KW-1185">Reference proteome</keyword>
<keyword id="KW-0964">Secreted</keyword>
<keyword id="KW-0732">Signal</keyword>
<keyword id="KW-0808">Transferase</keyword>
<keyword id="KW-0843">Virulence</keyword>